<protein>
    <recommendedName>
        <fullName evidence="1">Glutamyl-tRNA(Gln) amidotransferase subunit A</fullName>
        <shortName evidence="1">Glu-ADT subunit A</shortName>
        <ecNumber evidence="1">6.3.5.7</ecNumber>
    </recommendedName>
</protein>
<name>GATA_BURL3</name>
<organism>
    <name type="scientific">Burkholderia lata (strain ATCC 17760 / DSM 23089 / LMG 22485 / NCIMB 9086 / R18194 / 383)</name>
    <dbReference type="NCBI Taxonomy" id="482957"/>
    <lineage>
        <taxon>Bacteria</taxon>
        <taxon>Pseudomonadati</taxon>
        <taxon>Pseudomonadota</taxon>
        <taxon>Betaproteobacteria</taxon>
        <taxon>Burkholderiales</taxon>
        <taxon>Burkholderiaceae</taxon>
        <taxon>Burkholderia</taxon>
        <taxon>Burkholderia cepacia complex</taxon>
    </lineage>
</organism>
<reference key="1">
    <citation type="submission" date="2005-10" db="EMBL/GenBank/DDBJ databases">
        <title>Complete sequence of chromosome 1 of Burkholderia sp. 383.</title>
        <authorList>
            <consortium name="US DOE Joint Genome Institute"/>
            <person name="Copeland A."/>
            <person name="Lucas S."/>
            <person name="Lapidus A."/>
            <person name="Barry K."/>
            <person name="Detter J.C."/>
            <person name="Glavina T."/>
            <person name="Hammon N."/>
            <person name="Israni S."/>
            <person name="Pitluck S."/>
            <person name="Chain P."/>
            <person name="Malfatti S."/>
            <person name="Shin M."/>
            <person name="Vergez L."/>
            <person name="Schmutz J."/>
            <person name="Larimer F."/>
            <person name="Land M."/>
            <person name="Kyrpides N."/>
            <person name="Lykidis A."/>
            <person name="Richardson P."/>
        </authorList>
    </citation>
    <scope>NUCLEOTIDE SEQUENCE [LARGE SCALE GENOMIC DNA]</scope>
    <source>
        <strain>ATCC 17760 / DSM 23089 / LMG 22485 / NCIMB 9086 / R18194 / 383</strain>
    </source>
</reference>
<sequence length="496" mass="52392">MHAKSLTELRAALAAKECSAVELAQLYLKRIEAARDLNAFVHVDADLTLAQAKAADAELARGAGGALTGLPIAHKDVFVTRGWHSTAGSKMLANYESPFDATVVARLQAAGMVTLGKTNMDEFAMGSSNENSAFGAVKNPWDTNAVPGGSSGGSSAAVAARLAPAATGTDTGGSIRQPASFAGVTGIKPTYGRVSRYGMIAFASSLDQGGPMAQSASDCALLLNAMAGFDERDSTSLEREDEDFTRHLGQPWAAGNDAGKPLAGLRIGLPNEYFGDGLADDVRATIDAALKQYEALGATLVPVSLPKTELSIPVYYVIAPAEASSNLSRFDGVRFGHRAAQYGDLLDMYKKSRAEGFGPEVKRRILVGAYVLSHGYYDAYYLQAQKIRRIIANDFQEAFKSCDVIMGPASPTVAWDLGSKGDDPVQMYLADIYTLSVSLAGLPGMSVPCGFGAGANAKRPVGLQIIGNYFNEARMLQVADAFQRATDWHKQVPAGV</sequence>
<gene>
    <name evidence="1" type="primary">gatA</name>
    <name type="ordered locus">Bcep18194_A6459</name>
</gene>
<proteinExistence type="inferred from homology"/>
<keyword id="KW-0067">ATP-binding</keyword>
<keyword id="KW-0436">Ligase</keyword>
<keyword id="KW-0547">Nucleotide-binding</keyword>
<keyword id="KW-0648">Protein biosynthesis</keyword>
<feature type="chain" id="PRO_0000241083" description="Glutamyl-tRNA(Gln) amidotransferase subunit A">
    <location>
        <begin position="1"/>
        <end position="496"/>
    </location>
</feature>
<feature type="active site" description="Charge relay system" evidence="1">
    <location>
        <position position="75"/>
    </location>
</feature>
<feature type="active site" description="Charge relay system" evidence="1">
    <location>
        <position position="150"/>
    </location>
</feature>
<feature type="active site" description="Acyl-ester intermediate" evidence="1">
    <location>
        <position position="174"/>
    </location>
</feature>
<comment type="function">
    <text evidence="1">Allows the formation of correctly charged Gln-tRNA(Gln) through the transamidation of misacylated Glu-tRNA(Gln) in organisms which lack glutaminyl-tRNA synthetase. The reaction takes place in the presence of glutamine and ATP through an activated gamma-phospho-Glu-tRNA(Gln).</text>
</comment>
<comment type="catalytic activity">
    <reaction evidence="1">
        <text>L-glutamyl-tRNA(Gln) + L-glutamine + ATP + H2O = L-glutaminyl-tRNA(Gln) + L-glutamate + ADP + phosphate + H(+)</text>
        <dbReference type="Rhea" id="RHEA:17521"/>
        <dbReference type="Rhea" id="RHEA-COMP:9681"/>
        <dbReference type="Rhea" id="RHEA-COMP:9684"/>
        <dbReference type="ChEBI" id="CHEBI:15377"/>
        <dbReference type="ChEBI" id="CHEBI:15378"/>
        <dbReference type="ChEBI" id="CHEBI:29985"/>
        <dbReference type="ChEBI" id="CHEBI:30616"/>
        <dbReference type="ChEBI" id="CHEBI:43474"/>
        <dbReference type="ChEBI" id="CHEBI:58359"/>
        <dbReference type="ChEBI" id="CHEBI:78520"/>
        <dbReference type="ChEBI" id="CHEBI:78521"/>
        <dbReference type="ChEBI" id="CHEBI:456216"/>
        <dbReference type="EC" id="6.3.5.7"/>
    </reaction>
</comment>
<comment type="subunit">
    <text evidence="1">Heterotrimer of A, B and C subunits.</text>
</comment>
<comment type="similarity">
    <text evidence="1">Belongs to the amidase family. GatA subfamily.</text>
</comment>
<evidence type="ECO:0000255" key="1">
    <source>
        <dbReference type="HAMAP-Rule" id="MF_00120"/>
    </source>
</evidence>
<dbReference type="EC" id="6.3.5.7" evidence="1"/>
<dbReference type="EMBL" id="CP000151">
    <property type="protein sequence ID" value="ABB10053.1"/>
    <property type="molecule type" value="Genomic_DNA"/>
</dbReference>
<dbReference type="RefSeq" id="WP_011353556.1">
    <property type="nucleotide sequence ID" value="NC_007510.1"/>
</dbReference>
<dbReference type="SMR" id="Q39BW3"/>
<dbReference type="GeneID" id="45096329"/>
<dbReference type="KEGG" id="bur:Bcep18194_A6459"/>
<dbReference type="PATRIC" id="fig|482957.22.peg.3491"/>
<dbReference type="HOGENOM" id="CLU_009600_0_3_4"/>
<dbReference type="Proteomes" id="UP000002705">
    <property type="component" value="Chromosome 1"/>
</dbReference>
<dbReference type="GO" id="GO:0030956">
    <property type="term" value="C:glutamyl-tRNA(Gln) amidotransferase complex"/>
    <property type="evidence" value="ECO:0007669"/>
    <property type="project" value="InterPro"/>
</dbReference>
<dbReference type="GO" id="GO:0005524">
    <property type="term" value="F:ATP binding"/>
    <property type="evidence" value="ECO:0007669"/>
    <property type="project" value="UniProtKB-KW"/>
</dbReference>
<dbReference type="GO" id="GO:0050567">
    <property type="term" value="F:glutaminyl-tRNA synthase (glutamine-hydrolyzing) activity"/>
    <property type="evidence" value="ECO:0007669"/>
    <property type="project" value="UniProtKB-UniRule"/>
</dbReference>
<dbReference type="GO" id="GO:0006412">
    <property type="term" value="P:translation"/>
    <property type="evidence" value="ECO:0007669"/>
    <property type="project" value="UniProtKB-UniRule"/>
</dbReference>
<dbReference type="Gene3D" id="3.90.1300.10">
    <property type="entry name" value="Amidase signature (AS) domain"/>
    <property type="match status" value="1"/>
</dbReference>
<dbReference type="HAMAP" id="MF_00120">
    <property type="entry name" value="GatA"/>
    <property type="match status" value="1"/>
</dbReference>
<dbReference type="InterPro" id="IPR000120">
    <property type="entry name" value="Amidase"/>
</dbReference>
<dbReference type="InterPro" id="IPR020556">
    <property type="entry name" value="Amidase_CS"/>
</dbReference>
<dbReference type="InterPro" id="IPR023631">
    <property type="entry name" value="Amidase_dom"/>
</dbReference>
<dbReference type="InterPro" id="IPR036928">
    <property type="entry name" value="AS_sf"/>
</dbReference>
<dbReference type="InterPro" id="IPR004412">
    <property type="entry name" value="GatA"/>
</dbReference>
<dbReference type="NCBIfam" id="TIGR00132">
    <property type="entry name" value="gatA"/>
    <property type="match status" value="1"/>
</dbReference>
<dbReference type="PANTHER" id="PTHR11895:SF151">
    <property type="entry name" value="GLUTAMYL-TRNA(GLN) AMIDOTRANSFERASE SUBUNIT A"/>
    <property type="match status" value="1"/>
</dbReference>
<dbReference type="PANTHER" id="PTHR11895">
    <property type="entry name" value="TRANSAMIDASE"/>
    <property type="match status" value="1"/>
</dbReference>
<dbReference type="Pfam" id="PF01425">
    <property type="entry name" value="Amidase"/>
    <property type="match status" value="1"/>
</dbReference>
<dbReference type="SUPFAM" id="SSF75304">
    <property type="entry name" value="Amidase signature (AS) enzymes"/>
    <property type="match status" value="1"/>
</dbReference>
<dbReference type="PROSITE" id="PS00571">
    <property type="entry name" value="AMIDASES"/>
    <property type="match status" value="1"/>
</dbReference>
<accession>Q39BW3</accession>